<organism>
    <name type="scientific">Bacillus cereus (strain AH187)</name>
    <dbReference type="NCBI Taxonomy" id="405534"/>
    <lineage>
        <taxon>Bacteria</taxon>
        <taxon>Bacillati</taxon>
        <taxon>Bacillota</taxon>
        <taxon>Bacilli</taxon>
        <taxon>Bacillales</taxon>
        <taxon>Bacillaceae</taxon>
        <taxon>Bacillus</taxon>
        <taxon>Bacillus cereus group</taxon>
    </lineage>
</organism>
<proteinExistence type="inferred from homology"/>
<evidence type="ECO:0000255" key="1">
    <source>
        <dbReference type="HAMAP-Rule" id="MF_00044"/>
    </source>
</evidence>
<dbReference type="EC" id="6.1.1.23" evidence="1"/>
<dbReference type="EMBL" id="CP001177">
    <property type="protein sequence ID" value="ACJ81528.1"/>
    <property type="molecule type" value="Genomic_DNA"/>
</dbReference>
<dbReference type="SMR" id="B7HQG0"/>
<dbReference type="KEGG" id="bcr:BCAH187_A4535"/>
<dbReference type="HOGENOM" id="CLU_014330_3_2_9"/>
<dbReference type="Proteomes" id="UP000002214">
    <property type="component" value="Chromosome"/>
</dbReference>
<dbReference type="GO" id="GO:0005737">
    <property type="term" value="C:cytoplasm"/>
    <property type="evidence" value="ECO:0007669"/>
    <property type="project" value="UniProtKB-SubCell"/>
</dbReference>
<dbReference type="GO" id="GO:0004815">
    <property type="term" value="F:aspartate-tRNA ligase activity"/>
    <property type="evidence" value="ECO:0007669"/>
    <property type="project" value="UniProtKB-UniRule"/>
</dbReference>
<dbReference type="GO" id="GO:0050560">
    <property type="term" value="F:aspartate-tRNA(Asn) ligase activity"/>
    <property type="evidence" value="ECO:0007669"/>
    <property type="project" value="UniProtKB-EC"/>
</dbReference>
<dbReference type="GO" id="GO:0005524">
    <property type="term" value="F:ATP binding"/>
    <property type="evidence" value="ECO:0007669"/>
    <property type="project" value="UniProtKB-UniRule"/>
</dbReference>
<dbReference type="GO" id="GO:0140096">
    <property type="term" value="F:catalytic activity, acting on a protein"/>
    <property type="evidence" value="ECO:0007669"/>
    <property type="project" value="UniProtKB-ARBA"/>
</dbReference>
<dbReference type="GO" id="GO:0003676">
    <property type="term" value="F:nucleic acid binding"/>
    <property type="evidence" value="ECO:0007669"/>
    <property type="project" value="InterPro"/>
</dbReference>
<dbReference type="GO" id="GO:0016740">
    <property type="term" value="F:transferase activity"/>
    <property type="evidence" value="ECO:0007669"/>
    <property type="project" value="UniProtKB-ARBA"/>
</dbReference>
<dbReference type="GO" id="GO:0006422">
    <property type="term" value="P:aspartyl-tRNA aminoacylation"/>
    <property type="evidence" value="ECO:0007669"/>
    <property type="project" value="UniProtKB-UniRule"/>
</dbReference>
<dbReference type="CDD" id="cd00777">
    <property type="entry name" value="AspRS_core"/>
    <property type="match status" value="1"/>
</dbReference>
<dbReference type="CDD" id="cd04317">
    <property type="entry name" value="EcAspRS_like_N"/>
    <property type="match status" value="1"/>
</dbReference>
<dbReference type="Gene3D" id="3.30.930.10">
    <property type="entry name" value="Bira Bifunctional Protein, Domain 2"/>
    <property type="match status" value="1"/>
</dbReference>
<dbReference type="Gene3D" id="3.30.1360.30">
    <property type="entry name" value="GAD-like domain"/>
    <property type="match status" value="1"/>
</dbReference>
<dbReference type="Gene3D" id="2.40.50.140">
    <property type="entry name" value="Nucleic acid-binding proteins"/>
    <property type="match status" value="1"/>
</dbReference>
<dbReference type="HAMAP" id="MF_00044">
    <property type="entry name" value="Asp_tRNA_synth_type1"/>
    <property type="match status" value="1"/>
</dbReference>
<dbReference type="InterPro" id="IPR004364">
    <property type="entry name" value="Aa-tRNA-synt_II"/>
</dbReference>
<dbReference type="InterPro" id="IPR006195">
    <property type="entry name" value="aa-tRNA-synth_II"/>
</dbReference>
<dbReference type="InterPro" id="IPR045864">
    <property type="entry name" value="aa-tRNA-synth_II/BPL/LPL"/>
</dbReference>
<dbReference type="InterPro" id="IPR004524">
    <property type="entry name" value="Asp-tRNA-ligase_1"/>
</dbReference>
<dbReference type="InterPro" id="IPR047089">
    <property type="entry name" value="Asp-tRNA-ligase_1_N"/>
</dbReference>
<dbReference type="InterPro" id="IPR002312">
    <property type="entry name" value="Asp/Asn-tRNA-synth_IIb"/>
</dbReference>
<dbReference type="InterPro" id="IPR047090">
    <property type="entry name" value="AspRS_core"/>
</dbReference>
<dbReference type="InterPro" id="IPR004115">
    <property type="entry name" value="GAD-like_sf"/>
</dbReference>
<dbReference type="InterPro" id="IPR029351">
    <property type="entry name" value="GAD_dom"/>
</dbReference>
<dbReference type="InterPro" id="IPR012340">
    <property type="entry name" value="NA-bd_OB-fold"/>
</dbReference>
<dbReference type="InterPro" id="IPR004365">
    <property type="entry name" value="NA-bd_OB_tRNA"/>
</dbReference>
<dbReference type="NCBIfam" id="TIGR00459">
    <property type="entry name" value="aspS_bact"/>
    <property type="match status" value="1"/>
</dbReference>
<dbReference type="NCBIfam" id="NF001750">
    <property type="entry name" value="PRK00476.1"/>
    <property type="match status" value="1"/>
</dbReference>
<dbReference type="PANTHER" id="PTHR22594:SF5">
    <property type="entry name" value="ASPARTATE--TRNA LIGASE, MITOCHONDRIAL"/>
    <property type="match status" value="1"/>
</dbReference>
<dbReference type="PANTHER" id="PTHR22594">
    <property type="entry name" value="ASPARTYL/LYSYL-TRNA SYNTHETASE"/>
    <property type="match status" value="1"/>
</dbReference>
<dbReference type="Pfam" id="PF02938">
    <property type="entry name" value="GAD"/>
    <property type="match status" value="1"/>
</dbReference>
<dbReference type="Pfam" id="PF00152">
    <property type="entry name" value="tRNA-synt_2"/>
    <property type="match status" value="1"/>
</dbReference>
<dbReference type="Pfam" id="PF01336">
    <property type="entry name" value="tRNA_anti-codon"/>
    <property type="match status" value="1"/>
</dbReference>
<dbReference type="PRINTS" id="PR01042">
    <property type="entry name" value="TRNASYNTHASP"/>
</dbReference>
<dbReference type="SUPFAM" id="SSF55681">
    <property type="entry name" value="Class II aaRS and biotin synthetases"/>
    <property type="match status" value="1"/>
</dbReference>
<dbReference type="SUPFAM" id="SSF55261">
    <property type="entry name" value="GAD domain-like"/>
    <property type="match status" value="1"/>
</dbReference>
<dbReference type="SUPFAM" id="SSF50249">
    <property type="entry name" value="Nucleic acid-binding proteins"/>
    <property type="match status" value="1"/>
</dbReference>
<dbReference type="PROSITE" id="PS50862">
    <property type="entry name" value="AA_TRNA_LIGASE_II"/>
    <property type="match status" value="1"/>
</dbReference>
<name>SYDND_BACC7</name>
<sequence>MAERTHACGKVTVEAVGQTVQLKGWVQKRRDLGGLIFIDLRDRTGIVQVVFNPETSKEALEVAETIRSEYVLHVEGTVVERGEGAINDNMATGRIEVQATKVNVLNAAKTTPIIIADDTDASEDVRLKYRYLDLRRPVMFNTFKMRHDVTKTIRNFLDTEEFLEVETPILTKSTPEGARDYLVPSRVHDGEFYALPQSPQLFKQLLMVGGFERYYQVARCFRDEDLRADRQPEFTQIDIEASFLTQEEILDMMERMMTKVMKDAKGVEISAPFPRMTYADAMARYGSDKPDTRFEMELTDLSEFAAGCGFKVFTSAVESGGQVKAINAKGAASKYSRKDIDALTEFVKVYGAKGLAWLKVEEDGLKGPIAKFFGEEDANVLMNTLEATAGDLLLFVADKKSVVADSLGALRLRLGKELELIDESKFNFLWVTDWPLLEYDEDADRYFAAHHPFTMPFREDVELLETAPEKARAQAYDLVLNGYELGGGSLRIYERDVQEKMFKALGFSQEEAQEQFGFLLEAFEYGTPPHGGIALGLDRLVMLLAGRTNLRDTIAFPKTASASCLLTEAPSPVAEAQLEELNLKLSLKEEK</sequence>
<gene>
    <name evidence="1" type="primary">aspS</name>
    <name type="ordered locus">BCAH187_A4535</name>
</gene>
<feature type="chain" id="PRO_1000198957" description="Aspartate--tRNA(Asp/Asn) ligase">
    <location>
        <begin position="1"/>
        <end position="591"/>
    </location>
</feature>
<feature type="region of interest" description="Aspartate" evidence="1">
    <location>
        <begin position="200"/>
        <end position="203"/>
    </location>
</feature>
<feature type="binding site" evidence="1">
    <location>
        <position position="176"/>
    </location>
    <ligand>
        <name>L-aspartate</name>
        <dbReference type="ChEBI" id="CHEBI:29991"/>
    </ligand>
</feature>
<feature type="binding site" evidence="1">
    <location>
        <begin position="222"/>
        <end position="224"/>
    </location>
    <ligand>
        <name>ATP</name>
        <dbReference type="ChEBI" id="CHEBI:30616"/>
    </ligand>
</feature>
<feature type="binding site" evidence="1">
    <location>
        <position position="222"/>
    </location>
    <ligand>
        <name>L-aspartate</name>
        <dbReference type="ChEBI" id="CHEBI:29991"/>
    </ligand>
</feature>
<feature type="binding site" evidence="1">
    <location>
        <position position="231"/>
    </location>
    <ligand>
        <name>ATP</name>
        <dbReference type="ChEBI" id="CHEBI:30616"/>
    </ligand>
</feature>
<feature type="binding site" evidence="1">
    <location>
        <position position="450"/>
    </location>
    <ligand>
        <name>L-aspartate</name>
        <dbReference type="ChEBI" id="CHEBI:29991"/>
    </ligand>
</feature>
<feature type="binding site" evidence="1">
    <location>
        <position position="484"/>
    </location>
    <ligand>
        <name>ATP</name>
        <dbReference type="ChEBI" id="CHEBI:30616"/>
    </ligand>
</feature>
<feature type="binding site" evidence="1">
    <location>
        <position position="491"/>
    </location>
    <ligand>
        <name>L-aspartate</name>
        <dbReference type="ChEBI" id="CHEBI:29991"/>
    </ligand>
</feature>
<feature type="binding site" evidence="1">
    <location>
        <begin position="536"/>
        <end position="539"/>
    </location>
    <ligand>
        <name>ATP</name>
        <dbReference type="ChEBI" id="CHEBI:30616"/>
    </ligand>
</feature>
<feature type="site" description="Important for tRNA non-discrimination" evidence="1">
    <location>
        <position position="84"/>
    </location>
</feature>
<protein>
    <recommendedName>
        <fullName evidence="1">Aspartate--tRNA(Asp/Asn) ligase</fullName>
        <ecNumber evidence="1">6.1.1.23</ecNumber>
    </recommendedName>
    <alternativeName>
        <fullName evidence="1">Aspartyl-tRNA synthetase</fullName>
        <shortName evidence="1">AspRS</shortName>
    </alternativeName>
    <alternativeName>
        <fullName evidence="1">Non-discriminating aspartyl-tRNA synthetase</fullName>
        <shortName evidence="1">ND-AspRS</shortName>
    </alternativeName>
</protein>
<reference key="1">
    <citation type="submission" date="2008-10" db="EMBL/GenBank/DDBJ databases">
        <title>Genome sequence of Bacillus cereus AH187.</title>
        <authorList>
            <person name="Dodson R.J."/>
            <person name="Durkin A.S."/>
            <person name="Rosovitz M.J."/>
            <person name="Rasko D.A."/>
            <person name="Kolsto A.B."/>
            <person name="Okstad O.A."/>
            <person name="Ravel J."/>
            <person name="Sutton G."/>
        </authorList>
    </citation>
    <scope>NUCLEOTIDE SEQUENCE [LARGE SCALE GENOMIC DNA]</scope>
    <source>
        <strain>AH187</strain>
    </source>
</reference>
<comment type="function">
    <text evidence="1">Aspartyl-tRNA synthetase with relaxed tRNA specificity since it is able to aspartylate not only its cognate tRNA(Asp) but also tRNA(Asn). Reaction proceeds in two steps: L-aspartate is first activated by ATP to form Asp-AMP and then transferred to the acceptor end of tRNA(Asp/Asn).</text>
</comment>
<comment type="catalytic activity">
    <reaction evidence="1">
        <text>tRNA(Asx) + L-aspartate + ATP = L-aspartyl-tRNA(Asx) + AMP + diphosphate</text>
        <dbReference type="Rhea" id="RHEA:18349"/>
        <dbReference type="Rhea" id="RHEA-COMP:9710"/>
        <dbReference type="Rhea" id="RHEA-COMP:9711"/>
        <dbReference type="ChEBI" id="CHEBI:29991"/>
        <dbReference type="ChEBI" id="CHEBI:30616"/>
        <dbReference type="ChEBI" id="CHEBI:33019"/>
        <dbReference type="ChEBI" id="CHEBI:78442"/>
        <dbReference type="ChEBI" id="CHEBI:78516"/>
        <dbReference type="ChEBI" id="CHEBI:456215"/>
        <dbReference type="EC" id="6.1.1.23"/>
    </reaction>
</comment>
<comment type="subunit">
    <text evidence="1">Homodimer.</text>
</comment>
<comment type="subcellular location">
    <subcellularLocation>
        <location evidence="1">Cytoplasm</location>
    </subcellularLocation>
</comment>
<comment type="similarity">
    <text evidence="1">Belongs to the class-II aminoacyl-tRNA synthetase family. Type 1 subfamily.</text>
</comment>
<accession>B7HQG0</accession>
<keyword id="KW-0030">Aminoacyl-tRNA synthetase</keyword>
<keyword id="KW-0067">ATP-binding</keyword>
<keyword id="KW-0963">Cytoplasm</keyword>
<keyword id="KW-0436">Ligase</keyword>
<keyword id="KW-0547">Nucleotide-binding</keyword>
<keyword id="KW-0648">Protein biosynthesis</keyword>